<proteinExistence type="evidence at protein level"/>
<protein>
    <recommendedName>
        <fullName evidence="15">Phosphoacetylglucosamine mutase</fullName>
        <shortName>PAGM</shortName>
        <ecNumber evidence="6 7 8">5.4.2.3</ecNumber>
    </recommendedName>
    <alternativeName>
        <fullName evidence="15">Acetylglucosamine phosphomutase</fullName>
    </alternativeName>
    <alternativeName>
        <fullName evidence="9">N-acetylglucosamine-phosphate mutase</fullName>
    </alternativeName>
    <alternativeName>
        <fullName evidence="16">Phosphoglucomutase-3</fullName>
        <shortName>PGM 3</shortName>
    </alternativeName>
</protein>
<sequence>MDLGAITKYSALHAKPNGLILQYGTAGFRTKAEHLDHVMFRMGLLAVLRSKQTKSTIGVMVTASHNPEEDNGVKLVDPLGEMLAPSWEEHATCLANAEEQDMQRVLIDISEKEAVNLQQDAFVVIGRDTRPSSEKLSQSVIDGVTVLGGQFHDYGLLTTPQLHYMVYCRNTGGRYGKATIEGYYQKLSKAFVELTKQASCSGDEYRSLKVDCANGIGALKLREMEHYFSQGLSVQLFNDGSKGKLNHLCGADFVKSHQKPPQGMEIKSNERCCSFDGDADRIVYYYHDADGHFHLIDGDKIATLISSFLKELLVEIGESLNIGVVQTAYANGSSTRYLEEVMKVPVYCTKTGVKHLHHKAQEFDIGVYFEANGHGTALFSTAVEMKIKQSAEQLEDKKRKAAKMLENIIDLFNQAAGDAISDMLVIEAILALKGLTVQQWDALYTDLPNRQLKVQVADRRVISTTDAERQAVTPPGLQEAINDLVKKYKLSRAFVRPSGTEDVVRVYAEADSQESADHLAHEVSLAVFQLAGGIGERPQPGF</sequence>
<reference key="1">
    <citation type="submission" date="1998-10" db="EMBL/GenBank/DDBJ databases">
        <authorList>
            <person name="Matthijs G."/>
            <person name="Schollen E."/>
            <person name="Dierickx D."/>
        </authorList>
    </citation>
    <scope>NUCLEOTIDE SEQUENCE [MRNA] (ISOFORM 1)</scope>
</reference>
<reference key="2">
    <citation type="journal article" date="2000" name="Gene">
        <title>Cloning and characterization of complementary DNA encoding human N-acetylglucosamine-phosphate mutase protein.</title>
        <authorList>
            <person name="Li C."/>
            <person name="Rodriguez M."/>
            <person name="Banerjee D."/>
        </authorList>
    </citation>
    <scope>NUCLEOTIDE SEQUENCE [MRNA] (ISOFORM 1)</scope>
    <scope>TISSUE SPECIFICITY</scope>
</reference>
<reference key="3">
    <citation type="journal article" date="2000" name="Biochim. Biophys. Acta">
        <title>Functional cloning and mutational analysis of the human cDNA for phosphoacetylglucosamine mutase: identification of the amino acid residues essential for the catalysis.</title>
        <authorList>
            <person name="Mio T."/>
            <person name="Yamada-Okabe T."/>
            <person name="Arisawa M."/>
            <person name="Yamada-Okabe H."/>
        </authorList>
    </citation>
    <scope>NUCLEOTIDE SEQUENCE [MRNA] (ISOFORM 1)</scope>
    <scope>MUTAGENESIS</scope>
    <scope>ACTIVE SITE</scope>
    <scope>VARIANT ASN-466</scope>
</reference>
<reference key="4">
    <citation type="journal article" date="2004" name="Nat. Genet.">
        <title>Complete sequencing and characterization of 21,243 full-length human cDNAs.</title>
        <authorList>
            <person name="Ota T."/>
            <person name="Suzuki Y."/>
            <person name="Nishikawa T."/>
            <person name="Otsuki T."/>
            <person name="Sugiyama T."/>
            <person name="Irie R."/>
            <person name="Wakamatsu A."/>
            <person name="Hayashi K."/>
            <person name="Sato H."/>
            <person name="Nagai K."/>
            <person name="Kimura K."/>
            <person name="Makita H."/>
            <person name="Sekine M."/>
            <person name="Obayashi M."/>
            <person name="Nishi T."/>
            <person name="Shibahara T."/>
            <person name="Tanaka T."/>
            <person name="Ishii S."/>
            <person name="Yamamoto J."/>
            <person name="Saito K."/>
            <person name="Kawai Y."/>
            <person name="Isono Y."/>
            <person name="Nakamura Y."/>
            <person name="Nagahari K."/>
            <person name="Murakami K."/>
            <person name="Yasuda T."/>
            <person name="Iwayanagi T."/>
            <person name="Wagatsuma M."/>
            <person name="Shiratori A."/>
            <person name="Sudo H."/>
            <person name="Hosoiri T."/>
            <person name="Kaku Y."/>
            <person name="Kodaira H."/>
            <person name="Kondo H."/>
            <person name="Sugawara M."/>
            <person name="Takahashi M."/>
            <person name="Kanda K."/>
            <person name="Yokoi T."/>
            <person name="Furuya T."/>
            <person name="Kikkawa E."/>
            <person name="Omura Y."/>
            <person name="Abe K."/>
            <person name="Kamihara K."/>
            <person name="Katsuta N."/>
            <person name="Sato K."/>
            <person name="Tanikawa M."/>
            <person name="Yamazaki M."/>
            <person name="Ninomiya K."/>
            <person name="Ishibashi T."/>
            <person name="Yamashita H."/>
            <person name="Murakawa K."/>
            <person name="Fujimori K."/>
            <person name="Tanai H."/>
            <person name="Kimata M."/>
            <person name="Watanabe M."/>
            <person name="Hiraoka S."/>
            <person name="Chiba Y."/>
            <person name="Ishida S."/>
            <person name="Ono Y."/>
            <person name="Takiguchi S."/>
            <person name="Watanabe S."/>
            <person name="Yosida M."/>
            <person name="Hotuta T."/>
            <person name="Kusano J."/>
            <person name="Kanehori K."/>
            <person name="Takahashi-Fujii A."/>
            <person name="Hara H."/>
            <person name="Tanase T.-O."/>
            <person name="Nomura Y."/>
            <person name="Togiya S."/>
            <person name="Komai F."/>
            <person name="Hara R."/>
            <person name="Takeuchi K."/>
            <person name="Arita M."/>
            <person name="Imose N."/>
            <person name="Musashino K."/>
            <person name="Yuuki H."/>
            <person name="Oshima A."/>
            <person name="Sasaki N."/>
            <person name="Aotsuka S."/>
            <person name="Yoshikawa Y."/>
            <person name="Matsunawa H."/>
            <person name="Ichihara T."/>
            <person name="Shiohata N."/>
            <person name="Sano S."/>
            <person name="Moriya S."/>
            <person name="Momiyama H."/>
            <person name="Satoh N."/>
            <person name="Takami S."/>
            <person name="Terashima Y."/>
            <person name="Suzuki O."/>
            <person name="Nakagawa S."/>
            <person name="Senoh A."/>
            <person name="Mizoguchi H."/>
            <person name="Goto Y."/>
            <person name="Shimizu F."/>
            <person name="Wakebe H."/>
            <person name="Hishigaki H."/>
            <person name="Watanabe T."/>
            <person name="Sugiyama A."/>
            <person name="Takemoto M."/>
            <person name="Kawakami B."/>
            <person name="Yamazaki M."/>
            <person name="Watanabe K."/>
            <person name="Kumagai A."/>
            <person name="Itakura S."/>
            <person name="Fukuzumi Y."/>
            <person name="Fujimori Y."/>
            <person name="Komiyama M."/>
            <person name="Tashiro H."/>
            <person name="Tanigami A."/>
            <person name="Fujiwara T."/>
            <person name="Ono T."/>
            <person name="Yamada K."/>
            <person name="Fujii Y."/>
            <person name="Ozaki K."/>
            <person name="Hirao M."/>
            <person name="Ohmori Y."/>
            <person name="Kawabata A."/>
            <person name="Hikiji T."/>
            <person name="Kobatake N."/>
            <person name="Inagaki H."/>
            <person name="Ikema Y."/>
            <person name="Okamoto S."/>
            <person name="Okitani R."/>
            <person name="Kawakami T."/>
            <person name="Noguchi S."/>
            <person name="Itoh T."/>
            <person name="Shigeta K."/>
            <person name="Senba T."/>
            <person name="Matsumura K."/>
            <person name="Nakajima Y."/>
            <person name="Mizuno T."/>
            <person name="Morinaga M."/>
            <person name="Sasaki M."/>
            <person name="Togashi T."/>
            <person name="Oyama M."/>
            <person name="Hata H."/>
            <person name="Watanabe M."/>
            <person name="Komatsu T."/>
            <person name="Mizushima-Sugano J."/>
            <person name="Satoh T."/>
            <person name="Shirai Y."/>
            <person name="Takahashi Y."/>
            <person name="Nakagawa K."/>
            <person name="Okumura K."/>
            <person name="Nagase T."/>
            <person name="Nomura N."/>
            <person name="Kikuchi H."/>
            <person name="Masuho Y."/>
            <person name="Yamashita R."/>
            <person name="Nakai K."/>
            <person name="Yada T."/>
            <person name="Nakamura Y."/>
            <person name="Ohara O."/>
            <person name="Isogai T."/>
            <person name="Sugano S."/>
        </authorList>
    </citation>
    <scope>NUCLEOTIDE SEQUENCE [LARGE SCALE MRNA] (ISOFORMS 1 AND 3)</scope>
    <source>
        <tissue>Placenta</tissue>
        <tissue>Testis</tissue>
    </source>
</reference>
<reference key="5">
    <citation type="journal article" date="2003" name="Nature">
        <title>The DNA sequence and analysis of human chromosome 6.</title>
        <authorList>
            <person name="Mungall A.J."/>
            <person name="Palmer S.A."/>
            <person name="Sims S.K."/>
            <person name="Edwards C.A."/>
            <person name="Ashurst J.L."/>
            <person name="Wilming L."/>
            <person name="Jones M.C."/>
            <person name="Horton R."/>
            <person name="Hunt S.E."/>
            <person name="Scott C.E."/>
            <person name="Gilbert J.G.R."/>
            <person name="Clamp M.E."/>
            <person name="Bethel G."/>
            <person name="Milne S."/>
            <person name="Ainscough R."/>
            <person name="Almeida J.P."/>
            <person name="Ambrose K.D."/>
            <person name="Andrews T.D."/>
            <person name="Ashwell R.I.S."/>
            <person name="Babbage A.K."/>
            <person name="Bagguley C.L."/>
            <person name="Bailey J."/>
            <person name="Banerjee R."/>
            <person name="Barker D.J."/>
            <person name="Barlow K.F."/>
            <person name="Bates K."/>
            <person name="Beare D.M."/>
            <person name="Beasley H."/>
            <person name="Beasley O."/>
            <person name="Bird C.P."/>
            <person name="Blakey S.E."/>
            <person name="Bray-Allen S."/>
            <person name="Brook J."/>
            <person name="Brown A.J."/>
            <person name="Brown J.Y."/>
            <person name="Burford D.C."/>
            <person name="Burrill W."/>
            <person name="Burton J."/>
            <person name="Carder C."/>
            <person name="Carter N.P."/>
            <person name="Chapman J.C."/>
            <person name="Clark S.Y."/>
            <person name="Clark G."/>
            <person name="Clee C.M."/>
            <person name="Clegg S."/>
            <person name="Cobley V."/>
            <person name="Collier R.E."/>
            <person name="Collins J.E."/>
            <person name="Colman L.K."/>
            <person name="Corby N.R."/>
            <person name="Coville G.J."/>
            <person name="Culley K.M."/>
            <person name="Dhami P."/>
            <person name="Davies J."/>
            <person name="Dunn M."/>
            <person name="Earthrowl M.E."/>
            <person name="Ellington A.E."/>
            <person name="Evans K.A."/>
            <person name="Faulkner L."/>
            <person name="Francis M.D."/>
            <person name="Frankish A."/>
            <person name="Frankland J."/>
            <person name="French L."/>
            <person name="Garner P."/>
            <person name="Garnett J."/>
            <person name="Ghori M.J."/>
            <person name="Gilby L.M."/>
            <person name="Gillson C.J."/>
            <person name="Glithero R.J."/>
            <person name="Grafham D.V."/>
            <person name="Grant M."/>
            <person name="Gribble S."/>
            <person name="Griffiths C."/>
            <person name="Griffiths M.N.D."/>
            <person name="Hall R."/>
            <person name="Halls K.S."/>
            <person name="Hammond S."/>
            <person name="Harley J.L."/>
            <person name="Hart E.A."/>
            <person name="Heath P.D."/>
            <person name="Heathcott R."/>
            <person name="Holmes S.J."/>
            <person name="Howden P.J."/>
            <person name="Howe K.L."/>
            <person name="Howell G.R."/>
            <person name="Huckle E."/>
            <person name="Humphray S.J."/>
            <person name="Humphries M.D."/>
            <person name="Hunt A.R."/>
            <person name="Johnson C.M."/>
            <person name="Joy A.A."/>
            <person name="Kay M."/>
            <person name="Keenan S.J."/>
            <person name="Kimberley A.M."/>
            <person name="King A."/>
            <person name="Laird G.K."/>
            <person name="Langford C."/>
            <person name="Lawlor S."/>
            <person name="Leongamornlert D.A."/>
            <person name="Leversha M."/>
            <person name="Lloyd C.R."/>
            <person name="Lloyd D.M."/>
            <person name="Loveland J.E."/>
            <person name="Lovell J."/>
            <person name="Martin S."/>
            <person name="Mashreghi-Mohammadi M."/>
            <person name="Maslen G.L."/>
            <person name="Matthews L."/>
            <person name="McCann O.T."/>
            <person name="McLaren S.J."/>
            <person name="McLay K."/>
            <person name="McMurray A."/>
            <person name="Moore M.J.F."/>
            <person name="Mullikin J.C."/>
            <person name="Niblett D."/>
            <person name="Nickerson T."/>
            <person name="Novik K.L."/>
            <person name="Oliver K."/>
            <person name="Overton-Larty E.K."/>
            <person name="Parker A."/>
            <person name="Patel R."/>
            <person name="Pearce A.V."/>
            <person name="Peck A.I."/>
            <person name="Phillimore B.J.C.T."/>
            <person name="Phillips S."/>
            <person name="Plumb R.W."/>
            <person name="Porter K.M."/>
            <person name="Ramsey Y."/>
            <person name="Ranby S.A."/>
            <person name="Rice C.M."/>
            <person name="Ross M.T."/>
            <person name="Searle S.M."/>
            <person name="Sehra H.K."/>
            <person name="Sheridan E."/>
            <person name="Skuce C.D."/>
            <person name="Smith S."/>
            <person name="Smith M."/>
            <person name="Spraggon L."/>
            <person name="Squares S.L."/>
            <person name="Steward C.A."/>
            <person name="Sycamore N."/>
            <person name="Tamlyn-Hall G."/>
            <person name="Tester J."/>
            <person name="Theaker A.J."/>
            <person name="Thomas D.W."/>
            <person name="Thorpe A."/>
            <person name="Tracey A."/>
            <person name="Tromans A."/>
            <person name="Tubby B."/>
            <person name="Wall M."/>
            <person name="Wallis J.M."/>
            <person name="West A.P."/>
            <person name="White S.S."/>
            <person name="Whitehead S.L."/>
            <person name="Whittaker H."/>
            <person name="Wild A."/>
            <person name="Willey D.J."/>
            <person name="Wilmer T.E."/>
            <person name="Wood J.M."/>
            <person name="Wray P.W."/>
            <person name="Wyatt J.C."/>
            <person name="Young L."/>
            <person name="Younger R.M."/>
            <person name="Bentley D.R."/>
            <person name="Coulson A."/>
            <person name="Durbin R.M."/>
            <person name="Hubbard T."/>
            <person name="Sulston J.E."/>
            <person name="Dunham I."/>
            <person name="Rogers J."/>
            <person name="Beck S."/>
        </authorList>
    </citation>
    <scope>NUCLEOTIDE SEQUENCE [LARGE SCALE GENOMIC DNA]</scope>
</reference>
<reference key="6">
    <citation type="submission" date="2005-09" db="EMBL/GenBank/DDBJ databases">
        <authorList>
            <person name="Mural R.J."/>
            <person name="Istrail S."/>
            <person name="Sutton G.G."/>
            <person name="Florea L."/>
            <person name="Halpern A.L."/>
            <person name="Mobarry C.M."/>
            <person name="Lippert R."/>
            <person name="Walenz B."/>
            <person name="Shatkay H."/>
            <person name="Dew I."/>
            <person name="Miller J.R."/>
            <person name="Flanigan M.J."/>
            <person name="Edwards N.J."/>
            <person name="Bolanos R."/>
            <person name="Fasulo D."/>
            <person name="Halldorsson B.V."/>
            <person name="Hannenhalli S."/>
            <person name="Turner R."/>
            <person name="Yooseph S."/>
            <person name="Lu F."/>
            <person name="Nusskern D.R."/>
            <person name="Shue B.C."/>
            <person name="Zheng X.H."/>
            <person name="Zhong F."/>
            <person name="Delcher A.L."/>
            <person name="Huson D.H."/>
            <person name="Kravitz S.A."/>
            <person name="Mouchard L."/>
            <person name="Reinert K."/>
            <person name="Remington K.A."/>
            <person name="Clark A.G."/>
            <person name="Waterman M.S."/>
            <person name="Eichler E.E."/>
            <person name="Adams M.D."/>
            <person name="Hunkapiller M.W."/>
            <person name="Myers E.W."/>
            <person name="Venter J.C."/>
        </authorList>
    </citation>
    <scope>NUCLEOTIDE SEQUENCE [LARGE SCALE GENOMIC DNA]</scope>
</reference>
<reference key="7">
    <citation type="journal article" date="2004" name="Genome Res.">
        <title>The status, quality, and expansion of the NIH full-length cDNA project: the Mammalian Gene Collection (MGC).</title>
        <authorList>
            <consortium name="The MGC Project Team"/>
        </authorList>
    </citation>
    <scope>NUCLEOTIDE SEQUENCE [LARGE SCALE MRNA] (ISOFORM 1)</scope>
    <scope>VARIANT ASN-466</scope>
    <source>
        <tissue>Placenta</tissue>
    </source>
</reference>
<reference key="8">
    <citation type="journal article" date="2007" name="BMC Genomics">
        <title>The full-ORF clone resource of the German cDNA consortium.</title>
        <authorList>
            <person name="Bechtel S."/>
            <person name="Rosenfelder H."/>
            <person name="Duda A."/>
            <person name="Schmidt C.P."/>
            <person name="Ernst U."/>
            <person name="Wellenreuther R."/>
            <person name="Mehrle A."/>
            <person name="Schuster C."/>
            <person name="Bahr A."/>
            <person name="Bloecker H."/>
            <person name="Heubner D."/>
            <person name="Hoerlein A."/>
            <person name="Michel G."/>
            <person name="Wedler H."/>
            <person name="Koehrer K."/>
            <person name="Ottenwaelder B."/>
            <person name="Poustka A."/>
            <person name="Wiemann S."/>
            <person name="Schupp I."/>
        </authorList>
    </citation>
    <scope>NUCLEOTIDE SEQUENCE [LARGE SCALE MRNA] OF 392-542 (ISOFORM 1)</scope>
    <source>
        <tissue>Testis</tissue>
    </source>
</reference>
<reference key="9">
    <citation type="journal article" date="2008" name="Proc. Natl. Acad. Sci. U.S.A.">
        <title>A quantitative atlas of mitotic phosphorylation.</title>
        <authorList>
            <person name="Dephoure N."/>
            <person name="Zhou C."/>
            <person name="Villen J."/>
            <person name="Beausoleil S.A."/>
            <person name="Bakalarski C.E."/>
            <person name="Elledge S.J."/>
            <person name="Gygi S.P."/>
        </authorList>
    </citation>
    <scope>PHOSPHORYLATION [LARGE SCALE ANALYSIS] AT SER-64</scope>
    <scope>IDENTIFICATION BY MASS SPECTROMETRY [LARGE SCALE ANALYSIS]</scope>
    <source>
        <tissue>Cervix carcinoma</tissue>
    </source>
</reference>
<reference key="10">
    <citation type="journal article" date="2009" name="Anal. Chem.">
        <title>Lys-N and trypsin cover complementary parts of the phosphoproteome in a refined SCX-based approach.</title>
        <authorList>
            <person name="Gauci S."/>
            <person name="Helbig A.O."/>
            <person name="Slijper M."/>
            <person name="Krijgsveld J."/>
            <person name="Heck A.J."/>
            <person name="Mohammed S."/>
        </authorList>
    </citation>
    <scope>ACETYLATION [LARGE SCALE ANALYSIS] AT MET-1</scope>
    <scope>IDENTIFICATION BY MASS SPECTROMETRY [LARGE SCALE ANALYSIS]</scope>
</reference>
<reference key="11">
    <citation type="journal article" date="2009" name="Sci. Signal.">
        <title>Quantitative phosphoproteomic analysis of T cell receptor signaling reveals system-wide modulation of protein-protein interactions.</title>
        <authorList>
            <person name="Mayya V."/>
            <person name="Lundgren D.H."/>
            <person name="Hwang S.-I."/>
            <person name="Rezaul K."/>
            <person name="Wu L."/>
            <person name="Eng J.K."/>
            <person name="Rodionov V."/>
            <person name="Han D.K."/>
        </authorList>
    </citation>
    <scope>PHOSPHORYLATION [LARGE SCALE ANALYSIS] AT SER-64</scope>
    <scope>IDENTIFICATION BY MASS SPECTROMETRY [LARGE SCALE ANALYSIS]</scope>
    <source>
        <tissue>Leukemic T-cell</tissue>
    </source>
</reference>
<reference key="12">
    <citation type="journal article" date="2010" name="Sci. Signal.">
        <title>Quantitative phosphoproteomics reveals widespread full phosphorylation site occupancy during mitosis.</title>
        <authorList>
            <person name="Olsen J.V."/>
            <person name="Vermeulen M."/>
            <person name="Santamaria A."/>
            <person name="Kumar C."/>
            <person name="Miller M.L."/>
            <person name="Jensen L.J."/>
            <person name="Gnad F."/>
            <person name="Cox J."/>
            <person name="Jensen T.S."/>
            <person name="Nigg E.A."/>
            <person name="Brunak S."/>
            <person name="Mann M."/>
        </authorList>
    </citation>
    <scope>PHOSPHORYLATION [LARGE SCALE ANALYSIS] AT SER-64</scope>
    <scope>IDENTIFICATION BY MASS SPECTROMETRY [LARGE SCALE ANALYSIS]</scope>
    <source>
        <tissue>Cervix carcinoma</tissue>
    </source>
</reference>
<reference key="13">
    <citation type="journal article" date="2011" name="BMC Syst. Biol.">
        <title>Initial characterization of the human central proteome.</title>
        <authorList>
            <person name="Burkard T.R."/>
            <person name="Planyavsky M."/>
            <person name="Kaupe I."/>
            <person name="Breitwieser F.P."/>
            <person name="Buerckstuemmer T."/>
            <person name="Bennett K.L."/>
            <person name="Superti-Furga G."/>
            <person name="Colinge J."/>
        </authorList>
    </citation>
    <scope>IDENTIFICATION BY MASS SPECTROMETRY [LARGE SCALE ANALYSIS]</scope>
</reference>
<reference key="14">
    <citation type="journal article" date="2011" name="Sci. Signal.">
        <title>System-wide temporal characterization of the proteome and phosphoproteome of human embryonic stem cell differentiation.</title>
        <authorList>
            <person name="Rigbolt K.T."/>
            <person name="Prokhorova T.A."/>
            <person name="Akimov V."/>
            <person name="Henningsen J."/>
            <person name="Johansen P.T."/>
            <person name="Kratchmarova I."/>
            <person name="Kassem M."/>
            <person name="Mann M."/>
            <person name="Olsen J.V."/>
            <person name="Blagoev B."/>
        </authorList>
    </citation>
    <scope>IDENTIFICATION BY MASS SPECTROMETRY [LARGE SCALE ANALYSIS]</scope>
</reference>
<reference key="15">
    <citation type="journal article" date="2012" name="Mol. Cell. Proteomics">
        <title>Comparative large-scale characterisation of plant vs. mammal proteins reveals similar and idiosyncratic N-alpha acetylation features.</title>
        <authorList>
            <person name="Bienvenut W.V."/>
            <person name="Sumpton D."/>
            <person name="Martinez A."/>
            <person name="Lilla S."/>
            <person name="Espagne C."/>
            <person name="Meinnel T."/>
            <person name="Giglione C."/>
        </authorList>
    </citation>
    <scope>ACETYLATION [LARGE SCALE ANALYSIS] AT MET-1</scope>
    <scope>IDENTIFICATION BY MASS SPECTROMETRY [LARGE SCALE ANALYSIS]</scope>
</reference>
<reference key="16">
    <citation type="journal article" date="2013" name="J. Proteome Res.">
        <title>Toward a comprehensive characterization of a human cancer cell phosphoproteome.</title>
        <authorList>
            <person name="Zhou H."/>
            <person name="Di Palma S."/>
            <person name="Preisinger C."/>
            <person name="Peng M."/>
            <person name="Polat A.N."/>
            <person name="Heck A.J."/>
            <person name="Mohammed S."/>
        </authorList>
    </citation>
    <scope>PHOSPHORYLATION [LARGE SCALE ANALYSIS] AT SER-64</scope>
    <scope>IDENTIFICATION BY MASS SPECTROMETRY [LARGE SCALE ANALYSIS]</scope>
    <source>
        <tissue>Cervix carcinoma</tissue>
        <tissue>Erythroleukemia</tissue>
    </source>
</reference>
<reference key="17">
    <citation type="journal article" date="2014" name="Am. J. Hum. Genet.">
        <title>PGM3 mutations cause a congenital disorder of glycosylation with severe immunodeficiency and skeletal dysplasia.</title>
        <authorList>
            <consortium name="Baylor-Johns Hopkins Center for Mendelian Genomics"/>
            <person name="Stray-Pedersen A."/>
            <person name="Backe P.H."/>
            <person name="Sorte H.S."/>
            <person name="Moerkrid L."/>
            <person name="Chokshi N.Y."/>
            <person name="Erichsen H.C."/>
            <person name="Gambin T."/>
            <person name="Elgstoeen K.B."/>
            <person name="Bjoeraas M."/>
            <person name="Wlodarski M.W."/>
            <person name="Krueger M."/>
            <person name="Jhangiani S.N."/>
            <person name="Muzny D.M."/>
            <person name="Patel A."/>
            <person name="Raymond K.M."/>
            <person name="Sasa G.S."/>
            <person name="Krance R.A."/>
            <person name="Martinez C.A."/>
            <person name="Abraham S.M."/>
            <person name="Speckmann C."/>
            <person name="Ehl S."/>
            <person name="Hall P."/>
            <person name="Forbes L.R."/>
            <person name="Merckoll E."/>
            <person name="Westvik J."/>
            <person name="Nishimura G."/>
            <person name="Rustad C.F."/>
            <person name="Abrahamsen T.G."/>
            <person name="Roennestad A."/>
            <person name="Osnes L.T."/>
            <person name="Egeland T."/>
            <person name="Roedningen O.K."/>
            <person name="Beck C.R."/>
            <person name="Boerwinkle E.A."/>
            <person name="Gibbs R.A."/>
            <person name="Lupski J.R."/>
            <person name="Orange J.S."/>
            <person name="Lausch E."/>
            <person name="Hanson I.C."/>
        </authorList>
    </citation>
    <scope>FUNCTION</scope>
    <scope>CATALYTIC ACTIVITY</scope>
    <scope>PATHWAY</scope>
    <scope>INVOLVEMENT IN IMD23</scope>
    <scope>VARIANTS IMD23 HIS-239; SER-246 AND ARG-451</scope>
    <scope>CHARACTERIZATION OF VARIANTS IMD23 HIS-239; SER-246 AND ARG-451</scope>
</reference>
<reference key="18">
    <citation type="journal article" date="2014" name="J. Allergy Clin. Immunol.">
        <title>Autosomal recessive phosphoglucomutase 3 (PGM3) mutations link glycosylation defects to atopy, immune deficiency, autoimmunity, and neurocognitive impairment.</title>
        <authorList>
            <person name="Zhang Y."/>
            <person name="Yu X."/>
            <person name="Ichikawa M."/>
            <person name="Lyons J.J."/>
            <person name="Datta S."/>
            <person name="Lamborn I.T."/>
            <person name="Jing H."/>
            <person name="Kim E.S."/>
            <person name="Biancalana M."/>
            <person name="Wolfe L.A."/>
            <person name="DiMaggio T."/>
            <person name="Matthews H.F."/>
            <person name="Kranick S.M."/>
            <person name="Stone K.D."/>
            <person name="Holland S.M."/>
            <person name="Reich D.S."/>
            <person name="Hughes J.D."/>
            <person name="Mehmet H."/>
            <person name="McElwee J."/>
            <person name="Freeman A.F."/>
            <person name="Freeze H.H."/>
            <person name="Su H.C."/>
            <person name="Milner J.D."/>
        </authorList>
    </citation>
    <scope>FUNCTION</scope>
    <scope>CATALYTIC ACTIVITY</scope>
    <scope>PATHWAY</scope>
    <scope>INVOLVEMENT IN IMD23</scope>
    <scope>VARIANTS IMD23 GLU-297 AND GLN-501</scope>
    <scope>CHARACTERIZATION OF VARIANTS IMD23 GLU-297 AND GLN-501</scope>
</reference>
<reference key="19">
    <citation type="journal article" date="2014" name="J. Allergy Clin. Immunol.">
        <title>Hypomorphic homozygous mutations in phosphoglucomutase 3 (PGM3) impair immunity and increase serum IgE levels.</title>
        <authorList>
            <person name="Sassi A."/>
            <person name="Lazaroski S."/>
            <person name="Wu G."/>
            <person name="Haslam S.M."/>
            <person name="Fliegauf M."/>
            <person name="Mellouli F."/>
            <person name="Patiroglu T."/>
            <person name="Unal E."/>
            <person name="Ozdemir M.A."/>
            <person name="Jouhadi Z."/>
            <person name="Khadir K."/>
            <person name="Ben-Khemis L."/>
            <person name="Ben-Ali M."/>
            <person name="Ben-Mustapha I."/>
            <person name="Borchani L."/>
            <person name="Pfeifer D."/>
            <person name="Jakob T."/>
            <person name="Khemiri M."/>
            <person name="Asplund A.C."/>
            <person name="Gustafsson M.O."/>
            <person name="Lundin K.E."/>
            <person name="Falk-Soerqvist E."/>
            <person name="Moens L.N."/>
            <person name="Gungor H.E."/>
            <person name="Engelhardt K.R."/>
            <person name="Dziadzio M."/>
            <person name="Stauss H."/>
            <person name="Fleckenstein B."/>
            <person name="Meier R."/>
            <person name="Prayitno K."/>
            <person name="Maul-Pavicic A."/>
            <person name="Schaffer S."/>
            <person name="Rakhmanov M."/>
            <person name="Henneke P."/>
            <person name="Kraus H."/>
            <person name="Eibel H."/>
            <person name="Koelsch U."/>
            <person name="Nadifi S."/>
            <person name="Nilsson M."/>
            <person name="Bejaoui M."/>
            <person name="Schaeffer A.A."/>
            <person name="Smith C.I."/>
            <person name="Dell A."/>
            <person name="Barbouche M.R."/>
            <person name="Grimbacher B."/>
        </authorList>
    </citation>
    <scope>FUNCTION</scope>
    <scope>CATALYTIC ACTIVITY</scope>
    <scope>PATHWAY</scope>
    <scope>INVOLVEMENT IN IMD23</scope>
    <scope>VARIANTS IMD23 SER-83; GLU-340 DEL AND TYR-502</scope>
    <scope>CHARACTERIZATION OF VARIANTS IMD23 SER-83; GLU-340 DEL AND TYR-502</scope>
</reference>
<reference key="20">
    <citation type="journal article" date="2014" name="J. Proteomics">
        <title>An enzyme assisted RP-RPLC approach for in-depth analysis of human liver phosphoproteome.</title>
        <authorList>
            <person name="Bian Y."/>
            <person name="Song C."/>
            <person name="Cheng K."/>
            <person name="Dong M."/>
            <person name="Wang F."/>
            <person name="Huang J."/>
            <person name="Sun D."/>
            <person name="Wang L."/>
            <person name="Ye M."/>
            <person name="Zou H."/>
        </authorList>
    </citation>
    <scope>PHOSPHORYLATION [LARGE SCALE ANALYSIS] AT THR-62 AND SER-64</scope>
    <scope>IDENTIFICATION BY MASS SPECTROMETRY [LARGE SCALE ANALYSIS]</scope>
    <source>
        <tissue>Liver</tissue>
    </source>
</reference>
<reference key="21">
    <citation type="journal article" date="2002" name="Ann. Hum. Genet.">
        <title>Identification of human phosphoglucomutase 3 (PGM3) as N-acetylglucosamine-phosphate mutase (AGM1).</title>
        <authorList>
            <person name="Pang H."/>
            <person name="Koda Y."/>
            <person name="Soejima M."/>
            <person name="Kimura H."/>
        </authorList>
    </citation>
    <scope>VARIANT ASN-466</scope>
</reference>
<keyword id="KW-0007">Acetylation</keyword>
<keyword id="KW-0025">Alternative splicing</keyword>
<keyword id="KW-0119">Carbohydrate metabolism</keyword>
<keyword id="KW-0225">Disease variant</keyword>
<keyword id="KW-0413">Isomerase</keyword>
<keyword id="KW-0460">Magnesium</keyword>
<keyword id="KW-0479">Metal-binding</keyword>
<keyword id="KW-0597">Phosphoprotein</keyword>
<keyword id="KW-1267">Proteomics identification</keyword>
<keyword id="KW-1185">Reference proteome</keyword>
<evidence type="ECO:0000250" key="1">
    <source>
        <dbReference type="UniProtKB" id="Q9P4V2"/>
    </source>
</evidence>
<evidence type="ECO:0000269" key="2">
    <source>
    </source>
</evidence>
<evidence type="ECO:0000269" key="3">
    <source>
    </source>
</evidence>
<evidence type="ECO:0000269" key="4">
    <source>
    </source>
</evidence>
<evidence type="ECO:0000269" key="5">
    <source>
    </source>
</evidence>
<evidence type="ECO:0000269" key="6">
    <source>
    </source>
</evidence>
<evidence type="ECO:0000269" key="7">
    <source>
    </source>
</evidence>
<evidence type="ECO:0000269" key="8">
    <source>
    </source>
</evidence>
<evidence type="ECO:0000303" key="9">
    <source>
    </source>
</evidence>
<evidence type="ECO:0000303" key="10">
    <source>
    </source>
</evidence>
<evidence type="ECO:0000303" key="11">
    <source>
    </source>
</evidence>
<evidence type="ECO:0000303" key="12">
    <source>
    </source>
</evidence>
<evidence type="ECO:0000303" key="13">
    <source>
    </source>
</evidence>
<evidence type="ECO:0000303" key="14">
    <source>
    </source>
</evidence>
<evidence type="ECO:0000305" key="15"/>
<evidence type="ECO:0000312" key="16">
    <source>
        <dbReference type="HGNC" id="HGNC:8907"/>
    </source>
</evidence>
<evidence type="ECO:0007744" key="17">
    <source>
    </source>
</evidence>
<evidence type="ECO:0007744" key="18">
    <source>
    </source>
</evidence>
<evidence type="ECO:0007744" key="19">
    <source>
    </source>
</evidence>
<evidence type="ECO:0007744" key="20">
    <source>
    </source>
</evidence>
<evidence type="ECO:0007744" key="21">
    <source>
    </source>
</evidence>
<evidence type="ECO:0007744" key="22">
    <source>
    </source>
</evidence>
<evidence type="ECO:0007744" key="23">
    <source>
    </source>
</evidence>
<feature type="chain" id="PRO_0000148013" description="Phosphoacetylglucosamine mutase">
    <location>
        <begin position="1"/>
        <end position="542"/>
    </location>
</feature>
<feature type="active site" description="Phosphoserine intermediate" evidence="10">
    <location>
        <position position="64"/>
    </location>
</feature>
<feature type="binding site" description="via phosphate group" evidence="1">
    <location>
        <position position="64"/>
    </location>
    <ligand>
        <name>Mg(2+)</name>
        <dbReference type="ChEBI" id="CHEBI:18420"/>
    </ligand>
</feature>
<feature type="binding site" evidence="1">
    <location>
        <position position="276"/>
    </location>
    <ligand>
        <name>Mg(2+)</name>
        <dbReference type="ChEBI" id="CHEBI:18420"/>
    </ligand>
</feature>
<feature type="binding site" evidence="1">
    <location>
        <position position="278"/>
    </location>
    <ligand>
        <name>Mg(2+)</name>
        <dbReference type="ChEBI" id="CHEBI:18420"/>
    </ligand>
</feature>
<feature type="binding site" evidence="1">
    <location>
        <position position="280"/>
    </location>
    <ligand>
        <name>Mg(2+)</name>
        <dbReference type="ChEBI" id="CHEBI:18420"/>
    </ligand>
</feature>
<feature type="binding site" evidence="1">
    <location>
        <begin position="370"/>
        <end position="372"/>
    </location>
    <ligand>
        <name>substrate</name>
    </ligand>
</feature>
<feature type="binding site" evidence="1">
    <location>
        <begin position="496"/>
        <end position="500"/>
    </location>
    <ligand>
        <name>substrate</name>
    </ligand>
</feature>
<feature type="binding site" evidence="1">
    <location>
        <position position="505"/>
    </location>
    <ligand>
        <name>substrate</name>
    </ligand>
</feature>
<feature type="modified residue" description="N-acetylmethionine" evidence="18 21">
    <location>
        <position position="1"/>
    </location>
</feature>
<feature type="modified residue" description="Phosphothreonine" evidence="23">
    <location>
        <position position="62"/>
    </location>
</feature>
<feature type="modified residue" description="Phosphoserine" evidence="17 19 20 22 23">
    <location>
        <position position="64"/>
    </location>
</feature>
<feature type="splice variant" id="VSP_047319" description="In isoform 3." evidence="11">
    <original>M</original>
    <variation>MGGEWGQSAICPESAQEWTYQVGQHLVDM</variation>
    <location>
        <position position="1"/>
    </location>
</feature>
<feature type="splice variant" id="VSP_047320" description="In isoform 2." evidence="15">
    <original>F</original>
    <variation>YKAAETTHNINNAFGPGTANEHTVP</variation>
    <location>
        <position position="542"/>
    </location>
</feature>
<feature type="sequence variant" id="VAR_071359" description="In IMD23; decreased phosphoacetylglucosamine mutase activity; no effect on protein abundance; dbSNP:rs267608260." evidence="7">
    <original>L</original>
    <variation>S</variation>
    <location>
        <position position="83"/>
    </location>
</feature>
<feature type="sequence variant" id="VAR_071360" description="In IMD23; decreased phosphoacetylglucosamine mutase activity; dbSNP:rs869312886." evidence="8">
    <original>D</original>
    <variation>H</variation>
    <location>
        <position position="239"/>
    </location>
</feature>
<feature type="sequence variant" id="VAR_071361" description="In IMD23; loss of phosphoacetylglucosamine mutase activity; dbSNP:rs587777562." evidence="8">
    <original>N</original>
    <variation>S</variation>
    <location>
        <position position="246"/>
    </location>
</feature>
<feature type="sequence variant" id="VAR_071362" description="In IMD23; decreased phosphoacetylglucosamine mutase activity; decreased protein abundance; dbSNP:rs587777415." evidence="6">
    <original>D</original>
    <variation>E</variation>
    <location>
        <position position="297"/>
    </location>
</feature>
<feature type="sequence variant" id="VAR_071363" description="In IMD23; decreased phosphoacetylglucosamine mutase activity; decreased protein abundance." evidence="7">
    <location>
        <position position="340"/>
    </location>
</feature>
<feature type="sequence variant" id="VAR_071364" description="In IMD23; decreased phosphoacetylglucosamine mutase activity; dbSNP:rs587777565." evidence="8">
    <original>Q</original>
    <variation>R</variation>
    <location>
        <position position="451"/>
    </location>
</feature>
<feature type="sequence variant" id="VAR_013489" description="In allele PGM3*2; dbSNP:rs473267." evidence="3 4 5">
    <original>D</original>
    <variation>N</variation>
    <location>
        <position position="466"/>
    </location>
</feature>
<feature type="sequence variant" id="VAR_071365" description="In IMD23; decreased phosphoacetylglucosamine mutase activity; no effect on protein abundance; dbSNP:rs587777413." evidence="6">
    <original>E</original>
    <variation>Q</variation>
    <location>
        <position position="501"/>
    </location>
</feature>
<feature type="sequence variant" id="VAR_071366" description="In IMD23; decreased function in U UDP-N-acetylglucosamine biosynthetic process; no effect on protein abundance; dbSNP:rs267608261." evidence="7">
    <original>D</original>
    <variation>Y</variation>
    <location>
        <position position="502"/>
    </location>
</feature>
<feature type="mutagenesis site" description="Loss of activity." evidence="3">
    <original>S</original>
    <variation>A</variation>
    <location>
        <position position="64"/>
    </location>
</feature>
<feature type="mutagenesis site" description="Loss of activity." evidence="3">
    <original>H</original>
    <variation>A</variation>
    <location>
        <position position="65"/>
    </location>
</feature>
<feature type="mutagenesis site" description="Loss of activity." evidence="3">
    <original>D</original>
    <variation>A</variation>
    <variation>E</variation>
    <location>
        <position position="278"/>
    </location>
</feature>
<feature type="mutagenesis site" description="Loss of activity." evidence="3">
    <original>R</original>
    <variation>A</variation>
    <variation>K</variation>
    <location>
        <position position="281"/>
    </location>
</feature>
<feature type="sequence conflict" description="In Ref. 4; BAG63306." evidence="15" ref="4">
    <original>A</original>
    <variation>V</variation>
    <location>
        <position position="5"/>
    </location>
</feature>
<feature type="sequence conflict" description="In Ref. 4; BAG63306." evidence="15" ref="4">
    <original>D</original>
    <variation>G</variation>
    <location>
        <position position="70"/>
    </location>
</feature>
<gene>
    <name evidence="16" type="primary">PGM3</name>
    <name evidence="10" type="synonym">AGM1</name>
</gene>
<accession>O95394</accession>
<accession>B2RB65</accession>
<accession>B4DX94</accession>
<accession>D6RF12</accession>
<accession>E1P547</accession>
<accession>E9PF86</accession>
<accession>Q5JWR4</accession>
<accession>Q96J46</accession>
<accession>Q9H8G5</accession>
<accession>Q9NS94</accession>
<accession>Q9NTT6</accession>
<accession>Q9UFV5</accession>
<accession>Q9UIY2</accession>
<dbReference type="EC" id="5.4.2.3" evidence="6 7 8"/>
<dbReference type="EMBL" id="AF102265">
    <property type="protein sequence ID" value="AAC72409.1"/>
    <property type="molecule type" value="mRNA"/>
</dbReference>
<dbReference type="EMBL" id="AF180371">
    <property type="protein sequence ID" value="AAD55097.1"/>
    <property type="molecule type" value="mRNA"/>
</dbReference>
<dbReference type="EMBL" id="AB032081">
    <property type="protein sequence ID" value="BAB00613.1"/>
    <property type="molecule type" value="mRNA"/>
</dbReference>
<dbReference type="EMBL" id="AK023709">
    <property type="protein sequence ID" value="BAB14652.1"/>
    <property type="status" value="ALT_INIT"/>
    <property type="molecule type" value="mRNA"/>
</dbReference>
<dbReference type="EMBL" id="AK301867">
    <property type="protein sequence ID" value="BAG63306.1"/>
    <property type="molecule type" value="mRNA"/>
</dbReference>
<dbReference type="EMBL" id="AK314512">
    <property type="protein sequence ID" value="BAG37112.1"/>
    <property type="molecule type" value="mRNA"/>
</dbReference>
<dbReference type="EMBL" id="AL049699">
    <property type="status" value="NOT_ANNOTATED_CDS"/>
    <property type="molecule type" value="Genomic_DNA"/>
</dbReference>
<dbReference type="EMBL" id="AL121716">
    <property type="status" value="NOT_ANNOTATED_CDS"/>
    <property type="molecule type" value="Genomic_DNA"/>
</dbReference>
<dbReference type="EMBL" id="CH471051">
    <property type="protein sequence ID" value="EAW48670.1"/>
    <property type="molecule type" value="Genomic_DNA"/>
</dbReference>
<dbReference type="EMBL" id="CH471051">
    <property type="protein sequence ID" value="EAW48671.1"/>
    <property type="molecule type" value="Genomic_DNA"/>
</dbReference>
<dbReference type="EMBL" id="BC001258">
    <property type="protein sequence ID" value="AAH01258.1"/>
    <property type="molecule type" value="mRNA"/>
</dbReference>
<dbReference type="EMBL" id="AL117443">
    <property type="protein sequence ID" value="CAB55928.1"/>
    <property type="molecule type" value="mRNA"/>
</dbReference>
<dbReference type="CCDS" id="CCDS4997.1">
    <molecule id="O95394-1"/>
</dbReference>
<dbReference type="CCDS" id="CCDS56435.1">
    <molecule id="O95394-3"/>
</dbReference>
<dbReference type="CCDS" id="CCDS56436.1">
    <molecule id="O95394-4"/>
</dbReference>
<dbReference type="PIR" id="T17238">
    <property type="entry name" value="T17238"/>
</dbReference>
<dbReference type="RefSeq" id="NP_001186846.1">
    <molecule id="O95394-4"/>
    <property type="nucleotide sequence ID" value="NM_001199917.2"/>
</dbReference>
<dbReference type="RefSeq" id="NP_001186848.1">
    <molecule id="O95394-3"/>
    <property type="nucleotide sequence ID" value="NM_001199919.2"/>
</dbReference>
<dbReference type="RefSeq" id="NP_001354216.1">
    <molecule id="O95394-4"/>
    <property type="nucleotide sequence ID" value="NM_001367287.1"/>
</dbReference>
<dbReference type="RefSeq" id="NP_056414.1">
    <molecule id="O95394-1"/>
    <property type="nucleotide sequence ID" value="NM_015599.3"/>
</dbReference>
<dbReference type="RefSeq" id="XP_016866425.1">
    <property type="nucleotide sequence ID" value="XM_017010936.1"/>
</dbReference>
<dbReference type="RefSeq" id="XP_047274832.1">
    <molecule id="O95394-3"/>
    <property type="nucleotide sequence ID" value="XM_047418876.1"/>
</dbReference>
<dbReference type="SMR" id="O95394"/>
<dbReference type="BioGRID" id="111257">
    <property type="interactions" value="87"/>
</dbReference>
<dbReference type="FunCoup" id="O95394">
    <property type="interactions" value="520"/>
</dbReference>
<dbReference type="IntAct" id="O95394">
    <property type="interactions" value="24"/>
</dbReference>
<dbReference type="MINT" id="O95394"/>
<dbReference type="STRING" id="9606.ENSP00000425809"/>
<dbReference type="GlyGen" id="O95394">
    <property type="glycosylation" value="2 sites, 1 O-linked glycan (1 site)"/>
</dbReference>
<dbReference type="iPTMnet" id="O95394"/>
<dbReference type="MetOSite" id="O95394"/>
<dbReference type="PhosphoSitePlus" id="O95394"/>
<dbReference type="BioMuta" id="PGM3"/>
<dbReference type="jPOST" id="O95394"/>
<dbReference type="MassIVE" id="O95394"/>
<dbReference type="PaxDb" id="9606-ENSP00000425809"/>
<dbReference type="PeptideAtlas" id="O95394"/>
<dbReference type="ProteomicsDB" id="14425"/>
<dbReference type="ProteomicsDB" id="20051"/>
<dbReference type="ProteomicsDB" id="50845">
    <molecule id="O95394-1"/>
</dbReference>
<dbReference type="Pumba" id="O95394"/>
<dbReference type="Antibodypedia" id="31667">
    <property type="antibodies" value="284 antibodies from 25 providers"/>
</dbReference>
<dbReference type="DNASU" id="5238"/>
<dbReference type="Ensembl" id="ENST00000506587.5">
    <molecule id="O95394-4"/>
    <property type="protein sequence ID" value="ENSP00000425809.1"/>
    <property type="gene ID" value="ENSG00000013375.17"/>
</dbReference>
<dbReference type="Ensembl" id="ENST00000507554.2">
    <molecule id="O95394-1"/>
    <property type="protein sequence ID" value="ENSP00000425558.2"/>
    <property type="gene ID" value="ENSG00000013375.17"/>
</dbReference>
<dbReference type="Ensembl" id="ENST00000508748.6">
    <molecule id="O95394-4"/>
    <property type="protein sequence ID" value="ENSP00000424865.2"/>
    <property type="gene ID" value="ENSG00000013375.17"/>
</dbReference>
<dbReference type="Ensembl" id="ENST00000512866.5">
    <molecule id="O95394-3"/>
    <property type="protein sequence ID" value="ENSP00000421565.1"/>
    <property type="gene ID" value="ENSG00000013375.17"/>
</dbReference>
<dbReference type="Ensembl" id="ENST00000513973.6">
    <molecule id="O95394-1"/>
    <property type="protein sequence ID" value="ENSP00000424874.1"/>
    <property type="gene ID" value="ENSG00000013375.17"/>
</dbReference>
<dbReference type="Ensembl" id="ENST00000698524.1">
    <molecule id="O95394-1"/>
    <property type="protein sequence ID" value="ENSP00000513773.1"/>
    <property type="gene ID" value="ENSG00000013375.17"/>
</dbReference>
<dbReference type="GeneID" id="5238"/>
<dbReference type="KEGG" id="hsa:5238"/>
<dbReference type="MANE-Select" id="ENST00000513973.6">
    <property type="protein sequence ID" value="ENSP00000424874.1"/>
    <property type="RefSeq nucleotide sequence ID" value="NM_015599.3"/>
    <property type="RefSeq protein sequence ID" value="NP_056414.1"/>
</dbReference>
<dbReference type="UCSC" id="uc003pju.3">
    <molecule id="O95394-1"/>
    <property type="organism name" value="human"/>
</dbReference>
<dbReference type="AGR" id="HGNC:8907"/>
<dbReference type="CTD" id="5238"/>
<dbReference type="DisGeNET" id="5238"/>
<dbReference type="GeneCards" id="PGM3"/>
<dbReference type="GeneReviews" id="PGM3"/>
<dbReference type="HGNC" id="HGNC:8907">
    <property type="gene designation" value="PGM3"/>
</dbReference>
<dbReference type="HPA" id="ENSG00000013375">
    <property type="expression patterns" value="Low tissue specificity"/>
</dbReference>
<dbReference type="MalaCards" id="PGM3"/>
<dbReference type="MIM" id="172100">
    <property type="type" value="gene"/>
</dbReference>
<dbReference type="MIM" id="615816">
    <property type="type" value="phenotype"/>
</dbReference>
<dbReference type="neXtProt" id="NX_O95394"/>
<dbReference type="OpenTargets" id="ENSG00000013375"/>
<dbReference type="Orphanet" id="443811">
    <property type="disease" value="PGM3-CDG"/>
</dbReference>
<dbReference type="PharmGKB" id="PA33244"/>
<dbReference type="VEuPathDB" id="HostDB:ENSG00000013375"/>
<dbReference type="eggNOG" id="KOG2537">
    <property type="taxonomic scope" value="Eukaryota"/>
</dbReference>
<dbReference type="GeneTree" id="ENSGT00390000000509"/>
<dbReference type="HOGENOM" id="CLU_022890_1_0_1"/>
<dbReference type="InParanoid" id="O95394"/>
<dbReference type="OMA" id="WEAYATK"/>
<dbReference type="OrthoDB" id="1928at2759"/>
<dbReference type="PAN-GO" id="O95394">
    <property type="GO annotations" value="3 GO annotations based on evolutionary models"/>
</dbReference>
<dbReference type="PhylomeDB" id="O95394"/>
<dbReference type="TreeFam" id="TF105670"/>
<dbReference type="BioCyc" id="MetaCyc:HS00347-MONOMER"/>
<dbReference type="BRENDA" id="5.4.2.3">
    <property type="organism ID" value="2681"/>
</dbReference>
<dbReference type="PathwayCommons" id="O95394"/>
<dbReference type="Reactome" id="R-HSA-446210">
    <property type="pathway name" value="Synthesis of UDP-N-acetyl-glucosamine"/>
</dbReference>
<dbReference type="SABIO-RK" id="O95394"/>
<dbReference type="SignaLink" id="O95394"/>
<dbReference type="UniPathway" id="UPA00113">
    <property type="reaction ID" value="UER00530"/>
</dbReference>
<dbReference type="BioGRID-ORCS" id="5238">
    <property type="hits" value="168 hits in 1168 CRISPR screens"/>
</dbReference>
<dbReference type="ChiTaRS" id="PGM3">
    <property type="organism name" value="human"/>
</dbReference>
<dbReference type="GeneWiki" id="Phosphoglucomutase_3"/>
<dbReference type="GenomeRNAi" id="5238"/>
<dbReference type="Pharos" id="O95394">
    <property type="development level" value="Tbio"/>
</dbReference>
<dbReference type="PRO" id="PR:O95394"/>
<dbReference type="Proteomes" id="UP000005640">
    <property type="component" value="Chromosome 6"/>
</dbReference>
<dbReference type="RNAct" id="O95394">
    <property type="molecule type" value="protein"/>
</dbReference>
<dbReference type="Bgee" id="ENSG00000013375">
    <property type="expression patterns" value="Expressed in body of pancreas and 185 other cell types or tissues"/>
</dbReference>
<dbReference type="ExpressionAtlas" id="O95394">
    <property type="expression patterns" value="baseline and differential"/>
</dbReference>
<dbReference type="GO" id="GO:0005829">
    <property type="term" value="C:cytosol"/>
    <property type="evidence" value="ECO:0000304"/>
    <property type="project" value="Reactome"/>
</dbReference>
<dbReference type="GO" id="GO:0000287">
    <property type="term" value="F:magnesium ion binding"/>
    <property type="evidence" value="ECO:0007669"/>
    <property type="project" value="InterPro"/>
</dbReference>
<dbReference type="GO" id="GO:0004610">
    <property type="term" value="F:phosphoacetylglucosamine mutase activity"/>
    <property type="evidence" value="ECO:0000314"/>
    <property type="project" value="UniProtKB"/>
</dbReference>
<dbReference type="GO" id="GO:0005975">
    <property type="term" value="P:carbohydrate metabolic process"/>
    <property type="evidence" value="ECO:0007669"/>
    <property type="project" value="InterPro"/>
</dbReference>
<dbReference type="GO" id="GO:0006041">
    <property type="term" value="P:glucosamine metabolic process"/>
    <property type="evidence" value="ECO:0000303"/>
    <property type="project" value="UniProtKB"/>
</dbReference>
<dbReference type="GO" id="GO:0030097">
    <property type="term" value="P:hemopoiesis"/>
    <property type="evidence" value="ECO:0000318"/>
    <property type="project" value="GO_Central"/>
</dbReference>
<dbReference type="GO" id="GO:0006487">
    <property type="term" value="P:protein N-linked glycosylation"/>
    <property type="evidence" value="ECO:0000315"/>
    <property type="project" value="UniProtKB"/>
</dbReference>
<dbReference type="GO" id="GO:0006493">
    <property type="term" value="P:protein O-linked glycosylation"/>
    <property type="evidence" value="ECO:0000315"/>
    <property type="project" value="UniProtKB"/>
</dbReference>
<dbReference type="GO" id="GO:0007283">
    <property type="term" value="P:spermatogenesis"/>
    <property type="evidence" value="ECO:0007669"/>
    <property type="project" value="Ensembl"/>
</dbReference>
<dbReference type="GO" id="GO:0006048">
    <property type="term" value="P:UDP-N-acetylglucosamine biosynthetic process"/>
    <property type="evidence" value="ECO:0000315"/>
    <property type="project" value="UniProtKB"/>
</dbReference>
<dbReference type="CDD" id="cd03086">
    <property type="entry name" value="PGM3"/>
    <property type="match status" value="1"/>
</dbReference>
<dbReference type="FunFam" id="3.30.310.50:FF:000003">
    <property type="entry name" value="Phosphoacetylglucosamine mutase"/>
    <property type="match status" value="1"/>
</dbReference>
<dbReference type="FunFam" id="3.40.120.10:FF:000013">
    <property type="entry name" value="Phosphoacetylglucosamine mutase"/>
    <property type="match status" value="1"/>
</dbReference>
<dbReference type="FunFam" id="3.40.120.10:FF:000015">
    <property type="entry name" value="Phosphoacetylglucosamine mutase"/>
    <property type="match status" value="1"/>
</dbReference>
<dbReference type="FunFam" id="3.40.120.10:FF:000019">
    <property type="entry name" value="Phosphoacetylglucosamine mutase"/>
    <property type="match status" value="1"/>
</dbReference>
<dbReference type="Gene3D" id="3.40.120.10">
    <property type="entry name" value="Alpha-D-Glucose-1,6-Bisphosphate, subunit A, domain 3"/>
    <property type="match status" value="2"/>
</dbReference>
<dbReference type="Gene3D" id="3.30.310.50">
    <property type="entry name" value="Alpha-D-phosphohexomutase, C-terminal domain"/>
    <property type="match status" value="1"/>
</dbReference>
<dbReference type="InterPro" id="IPR005844">
    <property type="entry name" value="A-D-PHexomutase_a/b/a-I"/>
</dbReference>
<dbReference type="InterPro" id="IPR016055">
    <property type="entry name" value="A-D-PHexomutase_a/b/a-I/II/III"/>
</dbReference>
<dbReference type="InterPro" id="IPR005843">
    <property type="entry name" value="A-D-PHexomutase_C"/>
</dbReference>
<dbReference type="InterPro" id="IPR036900">
    <property type="entry name" value="A-D-PHexomutase_C_sf"/>
</dbReference>
<dbReference type="InterPro" id="IPR016066">
    <property type="entry name" value="A-D-PHexomutase_CS"/>
</dbReference>
<dbReference type="InterPro" id="IPR049023">
    <property type="entry name" value="AMG1_II"/>
</dbReference>
<dbReference type="InterPro" id="IPR049022">
    <property type="entry name" value="AMG1_III"/>
</dbReference>
<dbReference type="InterPro" id="IPR016657">
    <property type="entry name" value="PAGM"/>
</dbReference>
<dbReference type="PANTHER" id="PTHR45955">
    <property type="entry name" value="PHOSPHOACETYLGLUCOSAMINE MUTASE"/>
    <property type="match status" value="1"/>
</dbReference>
<dbReference type="PANTHER" id="PTHR45955:SF1">
    <property type="entry name" value="PHOSPHOACETYLGLUCOSAMINE MUTASE"/>
    <property type="match status" value="1"/>
</dbReference>
<dbReference type="Pfam" id="PF21405">
    <property type="entry name" value="AMG1_II"/>
    <property type="match status" value="1"/>
</dbReference>
<dbReference type="Pfam" id="PF21404">
    <property type="entry name" value="AMG1_III"/>
    <property type="match status" value="1"/>
</dbReference>
<dbReference type="Pfam" id="PF02878">
    <property type="entry name" value="PGM_PMM_I"/>
    <property type="match status" value="2"/>
</dbReference>
<dbReference type="Pfam" id="PF00408">
    <property type="entry name" value="PGM_PMM_IV"/>
    <property type="match status" value="1"/>
</dbReference>
<dbReference type="PIRSF" id="PIRSF016408">
    <property type="entry name" value="PAGM"/>
    <property type="match status" value="1"/>
</dbReference>
<dbReference type="SUPFAM" id="SSF55957">
    <property type="entry name" value="Phosphoglucomutase, C-terminal domain"/>
    <property type="match status" value="1"/>
</dbReference>
<dbReference type="SUPFAM" id="SSF53738">
    <property type="entry name" value="Phosphoglucomutase, first 3 domains"/>
    <property type="match status" value="3"/>
</dbReference>
<dbReference type="PROSITE" id="PS00710">
    <property type="entry name" value="PGM_PMM"/>
    <property type="match status" value="1"/>
</dbReference>
<organism>
    <name type="scientific">Homo sapiens</name>
    <name type="common">Human</name>
    <dbReference type="NCBI Taxonomy" id="9606"/>
    <lineage>
        <taxon>Eukaryota</taxon>
        <taxon>Metazoa</taxon>
        <taxon>Chordata</taxon>
        <taxon>Craniata</taxon>
        <taxon>Vertebrata</taxon>
        <taxon>Euteleostomi</taxon>
        <taxon>Mammalia</taxon>
        <taxon>Eutheria</taxon>
        <taxon>Euarchontoglires</taxon>
        <taxon>Primates</taxon>
        <taxon>Haplorrhini</taxon>
        <taxon>Catarrhini</taxon>
        <taxon>Hominidae</taxon>
        <taxon>Homo</taxon>
    </lineage>
</organism>
<comment type="function">
    <text evidence="12 13 14">Catalyzes the conversion of GlcNAc-6-P into GlcNAc-1-P during the synthesis of uridine diphosphate/UDP-GlcNAc, a sugar nucleotide critical to multiple glycosylation pathways including protein N- and O-glycosylation.</text>
</comment>
<comment type="catalytic activity">
    <reaction evidence="6 7 8">
        <text>N-acetyl-alpha-D-glucosamine 1-phosphate = N-acetyl-D-glucosamine 6-phosphate</text>
        <dbReference type="Rhea" id="RHEA:23804"/>
        <dbReference type="ChEBI" id="CHEBI:57513"/>
        <dbReference type="ChEBI" id="CHEBI:57776"/>
        <dbReference type="EC" id="5.4.2.3"/>
    </reaction>
</comment>
<comment type="cofactor">
    <cofactor evidence="1">
        <name>Mg(2+)</name>
        <dbReference type="ChEBI" id="CHEBI:18420"/>
    </cofactor>
    <text evidence="1">Binds 1 Mg(2+) ion per subunit.</text>
</comment>
<comment type="pathway">
    <text evidence="12 13 14">Nucleotide-sugar biosynthesis; UDP-N-acetyl-alpha-D-glucosamine biosynthesis; N-acetyl-alpha-D-glucosamine 1-phosphate from alpha-D-glucosamine 6-phosphate (route I): step 2/2.</text>
</comment>
<comment type="alternative products">
    <event type="alternative splicing"/>
    <isoform>
        <id>O95394-1</id>
        <name>1</name>
        <sequence type="displayed"/>
    </isoform>
    <isoform>
        <id>O95394-3</id>
        <name>2</name>
        <sequence type="described" ref="VSP_047320"/>
    </isoform>
    <isoform>
        <id>O95394-4</id>
        <name>3</name>
        <sequence type="described" ref="VSP_047319"/>
    </isoform>
</comment>
<comment type="tissue specificity">
    <text evidence="2">Found in many tissues except lung. Relatively high expression in pancreas, heart, liver, and placenta, and relatively low expression in brain, skeletal muscle and kidney.</text>
</comment>
<comment type="disease" evidence="6 7 8">
    <disease id="DI-04117">
        <name>Immunodeficiency 23</name>
        <acronym>IMD23</acronym>
        <description>A primary immunodeficiency syndrome characterized by recurrent respiratory and skin infections beginning in early childhood, severe atopy, increased serum IgE, and developmental delay or cognitive impairment of varying severity.</description>
        <dbReference type="MIM" id="615816"/>
    </disease>
    <text>The disease is caused by variants affecting the gene represented in this entry.</text>
</comment>
<comment type="similarity">
    <text evidence="15">Belongs to the phosphohexose mutase family.</text>
</comment>
<comment type="sequence caution" evidence="15">
    <conflict type="erroneous initiation">
        <sequence resource="EMBL-CDS" id="BAB14652"/>
    </conflict>
    <text>Truncated N-terminus.</text>
</comment>
<name>AGM1_HUMAN</name>